<gene>
    <name type="primary">TWIST1</name>
    <name type="synonym">TWIST</name>
</gene>
<accession>Q8MIB9</accession>
<name>TWST1_PONPY</name>
<dbReference type="EMBL" id="AJ488159">
    <property type="protein sequence ID" value="CAD32473.1"/>
    <property type="molecule type" value="Genomic_DNA"/>
</dbReference>
<dbReference type="SMR" id="Q8MIB9"/>
<dbReference type="GO" id="GO:0005634">
    <property type="term" value="C:nucleus"/>
    <property type="evidence" value="ECO:0007669"/>
    <property type="project" value="UniProtKB-SubCell"/>
</dbReference>
<dbReference type="GO" id="GO:0000981">
    <property type="term" value="F:DNA-binding transcription factor activity, RNA polymerase II-specific"/>
    <property type="evidence" value="ECO:0007669"/>
    <property type="project" value="InterPro"/>
</dbReference>
<dbReference type="GO" id="GO:0046983">
    <property type="term" value="F:protein dimerization activity"/>
    <property type="evidence" value="ECO:0007669"/>
    <property type="project" value="InterPro"/>
</dbReference>
<dbReference type="GO" id="GO:0000977">
    <property type="term" value="F:RNA polymerase II transcription regulatory region sequence-specific DNA binding"/>
    <property type="evidence" value="ECO:0007669"/>
    <property type="project" value="TreeGrafter"/>
</dbReference>
<dbReference type="GO" id="GO:0030154">
    <property type="term" value="P:cell differentiation"/>
    <property type="evidence" value="ECO:0007669"/>
    <property type="project" value="UniProtKB-KW"/>
</dbReference>
<dbReference type="GO" id="GO:0007517">
    <property type="term" value="P:muscle organ development"/>
    <property type="evidence" value="ECO:0007669"/>
    <property type="project" value="UniProtKB-KW"/>
</dbReference>
<dbReference type="GO" id="GO:0045892">
    <property type="term" value="P:negative regulation of DNA-templated transcription"/>
    <property type="evidence" value="ECO:0000250"/>
    <property type="project" value="UniProtKB"/>
</dbReference>
<dbReference type="GO" id="GO:0048511">
    <property type="term" value="P:rhythmic process"/>
    <property type="evidence" value="ECO:0007669"/>
    <property type="project" value="UniProtKB-KW"/>
</dbReference>
<dbReference type="CDD" id="cd11412">
    <property type="entry name" value="bHLH_TS_TWIST1"/>
    <property type="match status" value="1"/>
</dbReference>
<dbReference type="FunFam" id="4.10.280.10:FF:000030">
    <property type="entry name" value="Twist transcription factor"/>
    <property type="match status" value="1"/>
</dbReference>
<dbReference type="Gene3D" id="4.10.280.10">
    <property type="entry name" value="Helix-loop-helix DNA-binding domain"/>
    <property type="match status" value="1"/>
</dbReference>
<dbReference type="InterPro" id="IPR011598">
    <property type="entry name" value="bHLH_dom"/>
</dbReference>
<dbReference type="InterPro" id="IPR050283">
    <property type="entry name" value="E-box_TF_Regulators"/>
</dbReference>
<dbReference type="InterPro" id="IPR036638">
    <property type="entry name" value="HLH_DNA-bd_sf"/>
</dbReference>
<dbReference type="InterPro" id="IPR047093">
    <property type="entry name" value="TWIST1_bHLH"/>
</dbReference>
<dbReference type="PANTHER" id="PTHR23349">
    <property type="entry name" value="BASIC HELIX-LOOP-HELIX TRANSCRIPTION FACTOR, TWIST"/>
    <property type="match status" value="1"/>
</dbReference>
<dbReference type="PANTHER" id="PTHR23349:SF64">
    <property type="entry name" value="TWIST-RELATED PROTEIN 1"/>
    <property type="match status" value="1"/>
</dbReference>
<dbReference type="Pfam" id="PF00010">
    <property type="entry name" value="HLH"/>
    <property type="match status" value="1"/>
</dbReference>
<dbReference type="SMART" id="SM00353">
    <property type="entry name" value="HLH"/>
    <property type="match status" value="1"/>
</dbReference>
<dbReference type="SUPFAM" id="SSF47459">
    <property type="entry name" value="HLH, helix-loop-helix DNA-binding domain"/>
    <property type="match status" value="1"/>
</dbReference>
<dbReference type="PROSITE" id="PS50888">
    <property type="entry name" value="BHLH"/>
    <property type="match status" value="1"/>
</dbReference>
<evidence type="ECO:0000250" key="1"/>
<evidence type="ECO:0000250" key="2">
    <source>
        <dbReference type="UniProtKB" id="P26687"/>
    </source>
</evidence>
<evidence type="ECO:0000255" key="3">
    <source>
        <dbReference type="PROSITE-ProRule" id="PRU00981"/>
    </source>
</evidence>
<evidence type="ECO:0000256" key="4">
    <source>
        <dbReference type="SAM" id="MobiDB-lite"/>
    </source>
</evidence>
<reference key="1">
    <citation type="journal article" date="2002" name="Dev. Genes Evol.">
        <title>Natural Twist protein variants in a panel of eleven non-human primates: possible implications of Twist gene-tree for primate species tree.</title>
        <authorList>
            <person name="Gachot-Neveu H."/>
            <person name="Stoetzel C."/>
            <person name="Quillet R."/>
            <person name="Dollfus H."/>
            <person name="Perrin-Schmitt F."/>
        </authorList>
    </citation>
    <scope>NUCLEOTIDE SEQUENCE [GENOMIC DNA]</scope>
    <source>
        <tissue>Blood</tissue>
    </source>
</reference>
<proteinExistence type="inferred from homology"/>
<sequence length="203" mass="21071">MMQDVSSSPVSPADDSLSNSEEEPDRQQPPSGKRGGRKRRSSSRRSAGGGAGPGGAASGGVGGGDEPGSPAQGKRGKKSAGCGGGGGGGAGGGSSSGGGSPQSYEELQTQRVMANVRERQRTQSLNEAFAALRKIIPTLPSDKLSKIQTLKLAARYIDFLYQVLQSDELDSKMASCSYVAHERLSYAFSVWRMEGAWSMSASH</sequence>
<feature type="chain" id="PRO_0000127487" description="Twist-related protein 1">
    <location>
        <begin position="1"/>
        <end position="203"/>
    </location>
</feature>
<feature type="domain" description="bHLH" evidence="3">
    <location>
        <begin position="109"/>
        <end position="160"/>
    </location>
</feature>
<feature type="region of interest" description="Disordered" evidence="4">
    <location>
        <begin position="1"/>
        <end position="106"/>
    </location>
</feature>
<feature type="region of interest" description="Sufficient for transactivation activity" evidence="1">
    <location>
        <begin position="162"/>
        <end position="192"/>
    </location>
</feature>
<feature type="compositionally biased region" description="Low complexity" evidence="4">
    <location>
        <begin position="1"/>
        <end position="18"/>
    </location>
</feature>
<feature type="compositionally biased region" description="Basic residues" evidence="4">
    <location>
        <begin position="34"/>
        <end position="43"/>
    </location>
</feature>
<feature type="compositionally biased region" description="Gly residues" evidence="4">
    <location>
        <begin position="47"/>
        <end position="66"/>
    </location>
</feature>
<feature type="compositionally biased region" description="Gly residues" evidence="4">
    <location>
        <begin position="81"/>
        <end position="100"/>
    </location>
</feature>
<protein>
    <recommendedName>
        <fullName>Twist-related protein 1</fullName>
    </recommendedName>
</protein>
<organism>
    <name type="scientific">Pongo pygmaeus</name>
    <name type="common">Bornean orangutan</name>
    <dbReference type="NCBI Taxonomy" id="9600"/>
    <lineage>
        <taxon>Eukaryota</taxon>
        <taxon>Metazoa</taxon>
        <taxon>Chordata</taxon>
        <taxon>Craniata</taxon>
        <taxon>Vertebrata</taxon>
        <taxon>Euteleostomi</taxon>
        <taxon>Mammalia</taxon>
        <taxon>Eutheria</taxon>
        <taxon>Euarchontoglires</taxon>
        <taxon>Primates</taxon>
        <taxon>Haplorrhini</taxon>
        <taxon>Catarrhini</taxon>
        <taxon>Hominidae</taxon>
        <taxon>Pongo</taxon>
    </lineage>
</organism>
<keyword id="KW-0010">Activator</keyword>
<keyword id="KW-0090">Biological rhythms</keyword>
<keyword id="KW-0217">Developmental protein</keyword>
<keyword id="KW-0221">Differentiation</keyword>
<keyword id="KW-0238">DNA-binding</keyword>
<keyword id="KW-0517">Myogenesis</keyword>
<keyword id="KW-0539">Nucleus</keyword>
<keyword id="KW-0678">Repressor</keyword>
<keyword id="KW-0804">Transcription</keyword>
<keyword id="KW-0805">Transcription regulation</keyword>
<comment type="function">
    <text evidence="2">Acts as a transcriptional regulator. Inhibits myogenesis by sequestrating E proteins, inhibiting trans-activation by MEF2, and inhibiting DNA-binding by MYOD1 through physical interaction. This interaction probably involves the basic domains of both proteins. Also represses expression of pro-inflammatory cytokines such as TNFA and IL1B. Regulates cranial suture patterning and fusion. Activates transcription as a heterodimer with E proteins. Regulates gene expression differentially, depending on dimer composition. Homodimers induce expression of FGFR2 and POSTN while heterodimers repress FGFR2 and POSTN expression and induce THBS1 expression. Heterodimerization is also required for osteoblast differentiation. Represses the activity of the circadian transcriptional activator: NPAS2-BMAL1 heterodimer (By similarity).</text>
</comment>
<comment type="subunit">
    <text evidence="2">Efficient DNA binding requires dimerization with another bHLH protein. Homodimer or heterodimer with E proteins such as TCF3. ID1 binds preferentially to TCF3 but does not interact efficiently with TWIST1 so ID1 levels control the amount of TCF3 available to dimerize with TWIST and thus determine the type of dimer formed (By similarity).</text>
</comment>
<comment type="subcellular location">
    <subcellularLocation>
        <location evidence="3">Nucleus</location>
    </subcellularLocation>
</comment>